<name>BIOD_CORGB</name>
<gene>
    <name evidence="1" type="primary">bioD</name>
    <name type="ordered locus">cgR_2509</name>
</gene>
<proteinExistence type="inferred from homology"/>
<evidence type="ECO:0000255" key="1">
    <source>
        <dbReference type="HAMAP-Rule" id="MF_00336"/>
    </source>
</evidence>
<reference key="1">
    <citation type="journal article" date="2007" name="Microbiology">
        <title>Comparative analysis of the Corynebacterium glutamicum group and complete genome sequence of strain R.</title>
        <authorList>
            <person name="Yukawa H."/>
            <person name="Omumasaba C.A."/>
            <person name="Nonaka H."/>
            <person name="Kos P."/>
            <person name="Okai N."/>
            <person name="Suzuki N."/>
            <person name="Suda M."/>
            <person name="Tsuge Y."/>
            <person name="Watanabe J."/>
            <person name="Ikeda Y."/>
            <person name="Vertes A.A."/>
            <person name="Inui M."/>
        </authorList>
    </citation>
    <scope>NUCLEOTIDE SEQUENCE [LARGE SCALE GENOMIC DNA]</scope>
    <source>
        <strain>R</strain>
    </source>
</reference>
<sequence>MPFLFVSGTGTGVGKTFSTAVLVRYLADQGHDVLPVKLVQTGELPGEGDIFTIERLTGIAGEEFARFKDPLAPNLAARREGIEPIQFDQIISWLRGFDDPDRIIVVEGAGGLLVRLGEDFTLADVASALNAPLVIVTSTGLGSLNAAELSVEAANRRGLTVLGVLGGSIPQNPDLATMLNLEEFERVTGVPFWGALPEGLSRVEGFVEKQSFPALDAFKKPPAR</sequence>
<feature type="chain" id="PRO_0000302503" description="ATP-dependent dethiobiotin synthetase BioD">
    <location>
        <begin position="1"/>
        <end position="224"/>
    </location>
</feature>
<feature type="active site" evidence="1">
    <location>
        <position position="37"/>
    </location>
</feature>
<feature type="binding site" evidence="1">
    <location>
        <begin position="12"/>
        <end position="17"/>
    </location>
    <ligand>
        <name>ATP</name>
        <dbReference type="ChEBI" id="CHEBI:30616"/>
    </ligand>
</feature>
<feature type="binding site" evidence="1">
    <location>
        <position position="16"/>
    </location>
    <ligand>
        <name>Mg(2+)</name>
        <dbReference type="ChEBI" id="CHEBI:18420"/>
    </ligand>
</feature>
<feature type="binding site" evidence="1">
    <location>
        <position position="41"/>
    </location>
    <ligand>
        <name>substrate</name>
    </ligand>
</feature>
<feature type="binding site" evidence="1">
    <location>
        <begin position="107"/>
        <end position="110"/>
    </location>
    <ligand>
        <name>ATP</name>
        <dbReference type="ChEBI" id="CHEBI:30616"/>
    </ligand>
</feature>
<feature type="binding site" evidence="1">
    <location>
        <position position="107"/>
    </location>
    <ligand>
        <name>Mg(2+)</name>
        <dbReference type="ChEBI" id="CHEBI:18420"/>
    </ligand>
</feature>
<feature type="binding site" evidence="1">
    <location>
        <begin position="167"/>
        <end position="168"/>
    </location>
    <ligand>
        <name>ATP</name>
        <dbReference type="ChEBI" id="CHEBI:30616"/>
    </ligand>
</feature>
<feature type="binding site" evidence="1">
    <location>
        <begin position="197"/>
        <end position="199"/>
    </location>
    <ligand>
        <name>ATP</name>
        <dbReference type="ChEBI" id="CHEBI:30616"/>
    </ligand>
</feature>
<feature type="binding site" evidence="1">
    <location>
        <position position="204"/>
    </location>
    <ligand>
        <name>ATP</name>
        <dbReference type="ChEBI" id="CHEBI:30616"/>
    </ligand>
</feature>
<comment type="function">
    <text evidence="1">Catalyzes a mechanistically unusual reaction, the ATP-dependent insertion of CO2 between the N7 and N8 nitrogen atoms of 7,8-diaminopelargonic acid (DAPA, also called 7,8-diammoniononanoate) to form a ureido ring.</text>
</comment>
<comment type="catalytic activity">
    <reaction evidence="1">
        <text>(7R,8S)-7,8-diammoniononanoate + CO2 + ATP = (4R,5S)-dethiobiotin + ADP + phosphate + 3 H(+)</text>
        <dbReference type="Rhea" id="RHEA:15805"/>
        <dbReference type="ChEBI" id="CHEBI:15378"/>
        <dbReference type="ChEBI" id="CHEBI:16526"/>
        <dbReference type="ChEBI" id="CHEBI:30616"/>
        <dbReference type="ChEBI" id="CHEBI:43474"/>
        <dbReference type="ChEBI" id="CHEBI:149469"/>
        <dbReference type="ChEBI" id="CHEBI:149473"/>
        <dbReference type="ChEBI" id="CHEBI:456216"/>
        <dbReference type="EC" id="6.3.3.3"/>
    </reaction>
</comment>
<comment type="cofactor">
    <cofactor evidence="1">
        <name>Mg(2+)</name>
        <dbReference type="ChEBI" id="CHEBI:18420"/>
    </cofactor>
</comment>
<comment type="pathway">
    <text evidence="1">Cofactor biosynthesis; biotin biosynthesis; biotin from 7,8-diaminononanoate: step 1/2.</text>
</comment>
<comment type="subunit">
    <text evidence="1">Homodimer.</text>
</comment>
<comment type="subcellular location">
    <subcellularLocation>
        <location evidence="1">Cytoplasm</location>
    </subcellularLocation>
</comment>
<comment type="similarity">
    <text evidence="1">Belongs to the dethiobiotin synthetase family.</text>
</comment>
<organism>
    <name type="scientific">Corynebacterium glutamicum (strain R)</name>
    <dbReference type="NCBI Taxonomy" id="340322"/>
    <lineage>
        <taxon>Bacteria</taxon>
        <taxon>Bacillati</taxon>
        <taxon>Actinomycetota</taxon>
        <taxon>Actinomycetes</taxon>
        <taxon>Mycobacteriales</taxon>
        <taxon>Corynebacteriaceae</taxon>
        <taxon>Corynebacterium</taxon>
    </lineage>
</organism>
<protein>
    <recommendedName>
        <fullName evidence="1">ATP-dependent dethiobiotin synthetase BioD</fullName>
        <ecNumber evidence="1">6.3.3.3</ecNumber>
    </recommendedName>
    <alternativeName>
        <fullName evidence="1">DTB synthetase</fullName>
        <shortName evidence="1">DTBS</shortName>
    </alternativeName>
    <alternativeName>
        <fullName evidence="1">Dethiobiotin synthase</fullName>
    </alternativeName>
</protein>
<accession>A4QH04</accession>
<keyword id="KW-0067">ATP-binding</keyword>
<keyword id="KW-0093">Biotin biosynthesis</keyword>
<keyword id="KW-0963">Cytoplasm</keyword>
<keyword id="KW-0436">Ligase</keyword>
<keyword id="KW-0460">Magnesium</keyword>
<keyword id="KW-0479">Metal-binding</keyword>
<keyword id="KW-0547">Nucleotide-binding</keyword>
<dbReference type="EC" id="6.3.3.3" evidence="1"/>
<dbReference type="EMBL" id="AP009044">
    <property type="protein sequence ID" value="BAF55520.1"/>
    <property type="molecule type" value="Genomic_DNA"/>
</dbReference>
<dbReference type="RefSeq" id="WP_011897849.1">
    <property type="nucleotide sequence ID" value="NC_009342.1"/>
</dbReference>
<dbReference type="SMR" id="A4QH04"/>
<dbReference type="KEGG" id="cgt:cgR_2509"/>
<dbReference type="HOGENOM" id="CLU_072551_1_1_11"/>
<dbReference type="PhylomeDB" id="A4QH04"/>
<dbReference type="UniPathway" id="UPA00078">
    <property type="reaction ID" value="UER00161"/>
</dbReference>
<dbReference type="Proteomes" id="UP000006698">
    <property type="component" value="Chromosome"/>
</dbReference>
<dbReference type="GO" id="GO:0005829">
    <property type="term" value="C:cytosol"/>
    <property type="evidence" value="ECO:0007669"/>
    <property type="project" value="TreeGrafter"/>
</dbReference>
<dbReference type="GO" id="GO:0005524">
    <property type="term" value="F:ATP binding"/>
    <property type="evidence" value="ECO:0007669"/>
    <property type="project" value="UniProtKB-UniRule"/>
</dbReference>
<dbReference type="GO" id="GO:0004141">
    <property type="term" value="F:dethiobiotin synthase activity"/>
    <property type="evidence" value="ECO:0007669"/>
    <property type="project" value="UniProtKB-UniRule"/>
</dbReference>
<dbReference type="GO" id="GO:0000287">
    <property type="term" value="F:magnesium ion binding"/>
    <property type="evidence" value="ECO:0007669"/>
    <property type="project" value="UniProtKB-UniRule"/>
</dbReference>
<dbReference type="GO" id="GO:0009102">
    <property type="term" value="P:biotin biosynthetic process"/>
    <property type="evidence" value="ECO:0007669"/>
    <property type="project" value="UniProtKB-UniRule"/>
</dbReference>
<dbReference type="CDD" id="cd03109">
    <property type="entry name" value="DTBS"/>
    <property type="match status" value="1"/>
</dbReference>
<dbReference type="Gene3D" id="3.40.50.300">
    <property type="entry name" value="P-loop containing nucleotide triphosphate hydrolases"/>
    <property type="match status" value="1"/>
</dbReference>
<dbReference type="HAMAP" id="MF_00336">
    <property type="entry name" value="BioD"/>
    <property type="match status" value="1"/>
</dbReference>
<dbReference type="InterPro" id="IPR004472">
    <property type="entry name" value="DTB_synth_BioD"/>
</dbReference>
<dbReference type="InterPro" id="IPR027417">
    <property type="entry name" value="P-loop_NTPase"/>
</dbReference>
<dbReference type="NCBIfam" id="TIGR00347">
    <property type="entry name" value="bioD"/>
    <property type="match status" value="1"/>
</dbReference>
<dbReference type="PANTHER" id="PTHR43210">
    <property type="entry name" value="DETHIOBIOTIN SYNTHETASE"/>
    <property type="match status" value="1"/>
</dbReference>
<dbReference type="PANTHER" id="PTHR43210:SF5">
    <property type="entry name" value="DETHIOBIOTIN SYNTHETASE"/>
    <property type="match status" value="1"/>
</dbReference>
<dbReference type="Pfam" id="PF13500">
    <property type="entry name" value="AAA_26"/>
    <property type="match status" value="1"/>
</dbReference>
<dbReference type="PIRSF" id="PIRSF006755">
    <property type="entry name" value="DTB_synth"/>
    <property type="match status" value="1"/>
</dbReference>
<dbReference type="SUPFAM" id="SSF52540">
    <property type="entry name" value="P-loop containing nucleoside triphosphate hydrolases"/>
    <property type="match status" value="1"/>
</dbReference>